<accession>Q8E0H2</accession>
<feature type="chain" id="PRO_0000166626" description="Phosphoenolpyruvate carboxylase">
    <location>
        <begin position="1"/>
        <end position="931"/>
    </location>
</feature>
<feature type="active site" evidence="1">
    <location>
        <position position="138"/>
    </location>
</feature>
<feature type="active site" evidence="1">
    <location>
        <position position="594"/>
    </location>
</feature>
<gene>
    <name evidence="1" type="primary">ppc</name>
    <name type="ordered locus">SAG0759</name>
</gene>
<evidence type="ECO:0000255" key="1">
    <source>
        <dbReference type="HAMAP-Rule" id="MF_00595"/>
    </source>
</evidence>
<organism>
    <name type="scientific">Streptococcus agalactiae serotype V (strain ATCC BAA-611 / 2603 V/R)</name>
    <dbReference type="NCBI Taxonomy" id="208435"/>
    <lineage>
        <taxon>Bacteria</taxon>
        <taxon>Bacillati</taxon>
        <taxon>Bacillota</taxon>
        <taxon>Bacilli</taxon>
        <taxon>Lactobacillales</taxon>
        <taxon>Streptococcaceae</taxon>
        <taxon>Streptococcus</taxon>
    </lineage>
</organism>
<protein>
    <recommendedName>
        <fullName evidence="1">Phosphoenolpyruvate carboxylase</fullName>
        <shortName evidence="1">PEPC</shortName>
        <shortName evidence="1">PEPCase</shortName>
        <ecNumber evidence="1">4.1.1.31</ecNumber>
    </recommendedName>
</protein>
<proteinExistence type="inferred from homology"/>
<name>CAPP_STRA5</name>
<comment type="function">
    <text evidence="1">Forms oxaloacetate, a four-carbon dicarboxylic acid source for the tricarboxylic acid cycle.</text>
</comment>
<comment type="catalytic activity">
    <reaction evidence="1">
        <text>oxaloacetate + phosphate = phosphoenolpyruvate + hydrogencarbonate</text>
        <dbReference type="Rhea" id="RHEA:28370"/>
        <dbReference type="ChEBI" id="CHEBI:16452"/>
        <dbReference type="ChEBI" id="CHEBI:17544"/>
        <dbReference type="ChEBI" id="CHEBI:43474"/>
        <dbReference type="ChEBI" id="CHEBI:58702"/>
        <dbReference type="EC" id="4.1.1.31"/>
    </reaction>
</comment>
<comment type="cofactor">
    <cofactor evidence="1">
        <name>Mg(2+)</name>
        <dbReference type="ChEBI" id="CHEBI:18420"/>
    </cofactor>
</comment>
<comment type="similarity">
    <text evidence="1">Belongs to the PEPCase type 1 family.</text>
</comment>
<dbReference type="EC" id="4.1.1.31" evidence="1"/>
<dbReference type="EMBL" id="AE009948">
    <property type="protein sequence ID" value="AAM99646.1"/>
    <property type="molecule type" value="Genomic_DNA"/>
</dbReference>
<dbReference type="RefSeq" id="NP_687774.1">
    <property type="nucleotide sequence ID" value="NC_004116.1"/>
</dbReference>
<dbReference type="RefSeq" id="WP_000019267.1">
    <property type="nucleotide sequence ID" value="NC_004116.1"/>
</dbReference>
<dbReference type="SMR" id="Q8E0H2"/>
<dbReference type="STRING" id="208435.SAG0759"/>
<dbReference type="KEGG" id="sag:SAG0759"/>
<dbReference type="PATRIC" id="fig|208435.3.peg.765"/>
<dbReference type="HOGENOM" id="CLU_006557_2_0_9"/>
<dbReference type="OrthoDB" id="9768133at2"/>
<dbReference type="Proteomes" id="UP000000821">
    <property type="component" value="Chromosome"/>
</dbReference>
<dbReference type="GO" id="GO:0005829">
    <property type="term" value="C:cytosol"/>
    <property type="evidence" value="ECO:0007669"/>
    <property type="project" value="TreeGrafter"/>
</dbReference>
<dbReference type="GO" id="GO:0000287">
    <property type="term" value="F:magnesium ion binding"/>
    <property type="evidence" value="ECO:0007669"/>
    <property type="project" value="UniProtKB-UniRule"/>
</dbReference>
<dbReference type="GO" id="GO:0008964">
    <property type="term" value="F:phosphoenolpyruvate carboxylase activity"/>
    <property type="evidence" value="ECO:0007669"/>
    <property type="project" value="UniProtKB-UniRule"/>
</dbReference>
<dbReference type="GO" id="GO:0015977">
    <property type="term" value="P:carbon fixation"/>
    <property type="evidence" value="ECO:0007669"/>
    <property type="project" value="UniProtKB-UniRule"/>
</dbReference>
<dbReference type="GO" id="GO:0006107">
    <property type="term" value="P:oxaloacetate metabolic process"/>
    <property type="evidence" value="ECO:0007669"/>
    <property type="project" value="UniProtKB-UniRule"/>
</dbReference>
<dbReference type="GO" id="GO:0006099">
    <property type="term" value="P:tricarboxylic acid cycle"/>
    <property type="evidence" value="ECO:0007669"/>
    <property type="project" value="InterPro"/>
</dbReference>
<dbReference type="Gene3D" id="1.20.1440.90">
    <property type="entry name" value="Phosphoenolpyruvate/pyruvate domain"/>
    <property type="match status" value="1"/>
</dbReference>
<dbReference type="HAMAP" id="MF_00595">
    <property type="entry name" value="PEPcase_type1"/>
    <property type="match status" value="1"/>
</dbReference>
<dbReference type="InterPro" id="IPR021135">
    <property type="entry name" value="PEP_COase"/>
</dbReference>
<dbReference type="InterPro" id="IPR022805">
    <property type="entry name" value="PEP_COase_bac/pln-type"/>
</dbReference>
<dbReference type="InterPro" id="IPR018129">
    <property type="entry name" value="PEP_COase_Lys_AS"/>
</dbReference>
<dbReference type="InterPro" id="IPR033129">
    <property type="entry name" value="PEPCASE_His_AS"/>
</dbReference>
<dbReference type="InterPro" id="IPR015813">
    <property type="entry name" value="Pyrv/PenolPyrv_kinase-like_dom"/>
</dbReference>
<dbReference type="NCBIfam" id="NF000584">
    <property type="entry name" value="PRK00009.1"/>
    <property type="match status" value="1"/>
</dbReference>
<dbReference type="PANTHER" id="PTHR30523">
    <property type="entry name" value="PHOSPHOENOLPYRUVATE CARBOXYLASE"/>
    <property type="match status" value="1"/>
</dbReference>
<dbReference type="PANTHER" id="PTHR30523:SF6">
    <property type="entry name" value="PHOSPHOENOLPYRUVATE CARBOXYLASE"/>
    <property type="match status" value="1"/>
</dbReference>
<dbReference type="Pfam" id="PF00311">
    <property type="entry name" value="PEPcase"/>
    <property type="match status" value="1"/>
</dbReference>
<dbReference type="PRINTS" id="PR00150">
    <property type="entry name" value="PEPCARBXLASE"/>
</dbReference>
<dbReference type="SUPFAM" id="SSF51621">
    <property type="entry name" value="Phosphoenolpyruvate/pyruvate domain"/>
    <property type="match status" value="1"/>
</dbReference>
<dbReference type="PROSITE" id="PS00781">
    <property type="entry name" value="PEPCASE_1"/>
    <property type="match status" value="1"/>
</dbReference>
<dbReference type="PROSITE" id="PS00393">
    <property type="entry name" value="PEPCASE_2"/>
    <property type="match status" value="1"/>
</dbReference>
<keyword id="KW-0120">Carbon dioxide fixation</keyword>
<keyword id="KW-0456">Lyase</keyword>
<keyword id="KW-0460">Magnesium</keyword>
<keyword id="KW-1185">Reference proteome</keyword>
<sequence length="931" mass="105962">MSHPKLESSSNKEIITEEVGLLKQLLDEATQKLIGSESFDKIEKIVSLSLTDDYTGLKETISALSNEEMVIVSRYFSILPLLINISEDVDLAYEINYKNNLNQDYLGKLSTTIDVVAGHENAKDILEHVNVVPVLTAHPTQVQRKTVLELTSKIHDLLRKYRDVKAGIVNQEKWYADLRRYIGIIMQTDTIREKKLKVKNEITNVMEYYNRSLIKAVTKLTAEYKALAAKKGIHLENPKPLTMGMWIGGDRDGNPFVTAETLRLSAMVQSEVIINHYIEQLNELYRNMSLSINLTEVSPELVTLANQSQDNSVYRENEPYRKAFNFIQDKLVQTLLNLKVGSSPKEKFVSRQESSDIVGRYIKSHIAQVASDIQTEELPAYATAEEFKQDLLLVKQSLVQYGQDSLVDGELACLIQAVDIFGFYLATIDMRQDSSINEACVAELLKSANIVDDYSSLSEEEKCQLLLKELTEDPRTLSSTHAPKSELLQKELAIFQTARELKDQLGEDIINQHIISHTESVSDMFELAIMLKEVGLIDANQARIQIVPLFETIEDLDNSRDIMTQYLHYELVKKWIATNNNYQEIMLGYSDSNKDGGYLSSGWTLYKAQNELTKIGEENGIKITFFHGRGGTVGRGGGPSYEAITSQPFGSIKDRIRLTEQGEIIENKYGNQDAAYYNLEMLISASIDRMVTRMITNPNEIDNFRETMDGIVSESNAVYRNLVFDNPYFYDYFFEASPIKEVSSLNIGSRPAARKTITEISGLRAIPWVFSWSQNRIMFPGWYGVGSAFKHFIEQDEANLAKLQTMYQKWPFFNSLLSNVDMVLSKSNMNIALQYAQLAGSKEVRDVFNIILNEWQLTKDMILAIEQHDNLLEENPMLHASLDYRLPYFNVLNYVQIELIKRLRSNQLDEDYEKLIHITINGIATGLRNSG</sequence>
<reference key="1">
    <citation type="journal article" date="2002" name="Proc. Natl. Acad. Sci. U.S.A.">
        <title>Complete genome sequence and comparative genomic analysis of an emerging human pathogen, serotype V Streptococcus agalactiae.</title>
        <authorList>
            <person name="Tettelin H."/>
            <person name="Masignani V."/>
            <person name="Cieslewicz M.J."/>
            <person name="Eisen J.A."/>
            <person name="Peterson S.N."/>
            <person name="Wessels M.R."/>
            <person name="Paulsen I.T."/>
            <person name="Nelson K.E."/>
            <person name="Margarit I."/>
            <person name="Read T.D."/>
            <person name="Madoff L.C."/>
            <person name="Wolf A.M."/>
            <person name="Beanan M.J."/>
            <person name="Brinkac L.M."/>
            <person name="Daugherty S.C."/>
            <person name="DeBoy R.T."/>
            <person name="Durkin A.S."/>
            <person name="Kolonay J.F."/>
            <person name="Madupu R."/>
            <person name="Lewis M.R."/>
            <person name="Radune D."/>
            <person name="Fedorova N.B."/>
            <person name="Scanlan D."/>
            <person name="Khouri H.M."/>
            <person name="Mulligan S."/>
            <person name="Carty H.A."/>
            <person name="Cline R.T."/>
            <person name="Van Aken S.E."/>
            <person name="Gill J."/>
            <person name="Scarselli M."/>
            <person name="Mora M."/>
            <person name="Iacobini E.T."/>
            <person name="Brettoni C."/>
            <person name="Galli G."/>
            <person name="Mariani M."/>
            <person name="Vegni F."/>
            <person name="Maione D."/>
            <person name="Rinaudo D."/>
            <person name="Rappuoli R."/>
            <person name="Telford J.L."/>
            <person name="Kasper D.L."/>
            <person name="Grandi G."/>
            <person name="Fraser C.M."/>
        </authorList>
    </citation>
    <scope>NUCLEOTIDE SEQUENCE [LARGE SCALE GENOMIC DNA]</scope>
    <source>
        <strain>ATCC BAA-611 / 2603 V/R</strain>
    </source>
</reference>